<reference key="1">
    <citation type="journal article" date="1996" name="Science">
        <title>Complete genome sequence of the methanogenic archaeon, Methanococcus jannaschii.</title>
        <authorList>
            <person name="Bult C.J."/>
            <person name="White O."/>
            <person name="Olsen G.J."/>
            <person name="Zhou L."/>
            <person name="Fleischmann R.D."/>
            <person name="Sutton G.G."/>
            <person name="Blake J.A."/>
            <person name="FitzGerald L.M."/>
            <person name="Clayton R.A."/>
            <person name="Gocayne J.D."/>
            <person name="Kerlavage A.R."/>
            <person name="Dougherty B.A."/>
            <person name="Tomb J.-F."/>
            <person name="Adams M.D."/>
            <person name="Reich C.I."/>
            <person name="Overbeek R."/>
            <person name="Kirkness E.F."/>
            <person name="Weinstock K.G."/>
            <person name="Merrick J.M."/>
            <person name="Glodek A."/>
            <person name="Scott J.L."/>
            <person name="Geoghagen N.S.M."/>
            <person name="Weidman J.F."/>
            <person name="Fuhrmann J.L."/>
            <person name="Nguyen D."/>
            <person name="Utterback T.R."/>
            <person name="Kelley J.M."/>
            <person name="Peterson J.D."/>
            <person name="Sadow P.W."/>
            <person name="Hanna M.C."/>
            <person name="Cotton M.D."/>
            <person name="Roberts K.M."/>
            <person name="Hurst M.A."/>
            <person name="Kaine B.P."/>
            <person name="Borodovsky M."/>
            <person name="Klenk H.-P."/>
            <person name="Fraser C.M."/>
            <person name="Smith H.O."/>
            <person name="Woese C.R."/>
            <person name="Venter J.C."/>
        </authorList>
    </citation>
    <scope>NUCLEOTIDE SEQUENCE [LARGE SCALE GENOMIC DNA]</scope>
    <source>
        <strain>ATCC 43067 / DSM 2661 / JAL-1 / JCM 10045 / NBRC 100440</strain>
    </source>
</reference>
<proteinExistence type="evidence at protein level"/>
<accession>Q57698</accession>
<protein>
    <recommendedName>
        <fullName>Uncharacterized protein MJ0248</fullName>
    </recommendedName>
</protein>
<evidence type="ECO:0007829" key="1">
    <source>
        <dbReference type="PDB" id="7YIL"/>
    </source>
</evidence>
<dbReference type="EMBL" id="L77117">
    <property type="protein sequence ID" value="AAB98243.1"/>
    <property type="molecule type" value="Genomic_DNA"/>
</dbReference>
<dbReference type="PIR" id="A64331">
    <property type="entry name" value="A64331"/>
</dbReference>
<dbReference type="PDB" id="7YIL">
    <property type="method" value="X-ray"/>
    <property type="resolution" value="2.17 A"/>
    <property type="chains" value="A/B=21-115"/>
</dbReference>
<dbReference type="PDBsum" id="7YIL"/>
<dbReference type="SMR" id="Q57698"/>
<dbReference type="STRING" id="243232.MJ_0248"/>
<dbReference type="PaxDb" id="243232-MJ_0248"/>
<dbReference type="EnsemblBacteria" id="AAB98243">
    <property type="protein sequence ID" value="AAB98243"/>
    <property type="gene ID" value="MJ_0248"/>
</dbReference>
<dbReference type="KEGG" id="mja:MJ_0248"/>
<dbReference type="eggNOG" id="arCOG00551">
    <property type="taxonomic scope" value="Archaea"/>
</dbReference>
<dbReference type="HOGENOM" id="CLU_094462_0_0_2"/>
<dbReference type="InParanoid" id="Q57698"/>
<dbReference type="Proteomes" id="UP000000805">
    <property type="component" value="Chromosome"/>
</dbReference>
<dbReference type="CDD" id="cd11714">
    <property type="entry name" value="GINS_A_archaea"/>
    <property type="match status" value="1"/>
</dbReference>
<gene>
    <name type="ordered locus">MJ0248</name>
</gene>
<name>Y248_METJA</name>
<keyword id="KW-0002">3D-structure</keyword>
<keyword id="KW-1185">Reference proteome</keyword>
<feature type="chain" id="PRO_0000106759" description="Uncharacterized protein MJ0248">
    <location>
        <begin position="1"/>
        <end position="194"/>
    </location>
</feature>
<feature type="helix" evidence="1">
    <location>
        <begin position="25"/>
        <end position="36"/>
    </location>
</feature>
<feature type="helix" evidence="1">
    <location>
        <begin position="49"/>
        <end position="59"/>
    </location>
</feature>
<feature type="helix" evidence="1">
    <location>
        <begin position="63"/>
        <end position="86"/>
    </location>
</feature>
<feature type="helix" evidence="1">
    <location>
        <begin position="96"/>
        <end position="106"/>
    </location>
</feature>
<sequence>MRVFIIIIYFRCFSKDHKPYFVITMYESLKNYFFEEIKNDKLLKLPDDFYDDIREYIKNIKDDIELERVKYYFKELRKLRIYKALYLDNERENLLPEELNIIHAIENIVVELKIEETPEFKKPTEIDTPKPIYTINDIDVVKVDKNFPPFTDGTFIYDLNKNDVLSLDRKISHILEKHRIISRIGESYENPEES</sequence>
<organism>
    <name type="scientific">Methanocaldococcus jannaschii (strain ATCC 43067 / DSM 2661 / JAL-1 / JCM 10045 / NBRC 100440)</name>
    <name type="common">Methanococcus jannaschii</name>
    <dbReference type="NCBI Taxonomy" id="243232"/>
    <lineage>
        <taxon>Archaea</taxon>
        <taxon>Methanobacteriati</taxon>
        <taxon>Methanobacteriota</taxon>
        <taxon>Methanomada group</taxon>
        <taxon>Methanococci</taxon>
        <taxon>Methanococcales</taxon>
        <taxon>Methanocaldococcaceae</taxon>
        <taxon>Methanocaldococcus</taxon>
    </lineage>
</organism>